<keyword id="KW-0150">Chloroplast</keyword>
<keyword id="KW-0472">Membrane</keyword>
<keyword id="KW-0520">NAD</keyword>
<keyword id="KW-0521">NADP</keyword>
<keyword id="KW-0934">Plastid</keyword>
<keyword id="KW-0618">Plastoquinone</keyword>
<keyword id="KW-0874">Quinone</keyword>
<keyword id="KW-0793">Thylakoid</keyword>
<keyword id="KW-1278">Translocase</keyword>
<keyword id="KW-0812">Transmembrane</keyword>
<keyword id="KW-1133">Transmembrane helix</keyword>
<keyword id="KW-0813">Transport</keyword>
<name>NU4LC_CRYJA</name>
<feature type="chain" id="PRO_0000360321" description="NAD(P)H-quinone oxidoreductase subunit 4L, chloroplastic">
    <location>
        <begin position="1"/>
        <end position="100"/>
    </location>
</feature>
<feature type="transmembrane region" description="Helical" evidence="1">
    <location>
        <begin position="1"/>
        <end position="21"/>
    </location>
</feature>
<feature type="transmembrane region" description="Helical" evidence="1">
    <location>
        <begin position="31"/>
        <end position="51"/>
    </location>
</feature>
<feature type="transmembrane region" description="Helical" evidence="1">
    <location>
        <begin position="63"/>
        <end position="83"/>
    </location>
</feature>
<accession>B1VKI6</accession>
<evidence type="ECO:0000255" key="1">
    <source>
        <dbReference type="HAMAP-Rule" id="MF_01456"/>
    </source>
</evidence>
<dbReference type="EC" id="7.1.1.-" evidence="1"/>
<dbReference type="EMBL" id="AP009377">
    <property type="protein sequence ID" value="BAG16697.1"/>
    <property type="molecule type" value="Genomic_DNA"/>
</dbReference>
<dbReference type="RefSeq" id="YP_001806699.1">
    <property type="nucleotide sequence ID" value="NC_010548.1"/>
</dbReference>
<dbReference type="SMR" id="B1VKI6"/>
<dbReference type="GeneID" id="6166645"/>
<dbReference type="KEGG" id="cjf:6166645"/>
<dbReference type="OrthoDB" id="1925110at2759"/>
<dbReference type="GO" id="GO:0009535">
    <property type="term" value="C:chloroplast thylakoid membrane"/>
    <property type="evidence" value="ECO:0007669"/>
    <property type="project" value="UniProtKB-SubCell"/>
</dbReference>
<dbReference type="GO" id="GO:0030964">
    <property type="term" value="C:NADH dehydrogenase complex"/>
    <property type="evidence" value="ECO:0007669"/>
    <property type="project" value="TreeGrafter"/>
</dbReference>
<dbReference type="GO" id="GO:0016655">
    <property type="term" value="F:oxidoreductase activity, acting on NAD(P)H, quinone or similar compound as acceptor"/>
    <property type="evidence" value="ECO:0007669"/>
    <property type="project" value="UniProtKB-UniRule"/>
</dbReference>
<dbReference type="GO" id="GO:0048038">
    <property type="term" value="F:quinone binding"/>
    <property type="evidence" value="ECO:0007669"/>
    <property type="project" value="UniProtKB-KW"/>
</dbReference>
<dbReference type="GO" id="GO:0042773">
    <property type="term" value="P:ATP synthesis coupled electron transport"/>
    <property type="evidence" value="ECO:0007669"/>
    <property type="project" value="InterPro"/>
</dbReference>
<dbReference type="GO" id="GO:0019684">
    <property type="term" value="P:photosynthesis, light reaction"/>
    <property type="evidence" value="ECO:0007669"/>
    <property type="project" value="UniProtKB-UniRule"/>
</dbReference>
<dbReference type="FunFam" id="1.10.287.3510:FF:000001">
    <property type="entry name" value="NADH-quinone oxidoreductase subunit K"/>
    <property type="match status" value="1"/>
</dbReference>
<dbReference type="Gene3D" id="1.10.287.3510">
    <property type="match status" value="1"/>
</dbReference>
<dbReference type="HAMAP" id="MF_01456">
    <property type="entry name" value="NDH1_NuoK"/>
    <property type="match status" value="1"/>
</dbReference>
<dbReference type="InterPro" id="IPR001133">
    <property type="entry name" value="NADH_UbQ_OxRdtase_chain4L/K"/>
</dbReference>
<dbReference type="InterPro" id="IPR039428">
    <property type="entry name" value="NUOK/Mnh_C1-like"/>
</dbReference>
<dbReference type="NCBIfam" id="NF004320">
    <property type="entry name" value="PRK05715.1-2"/>
    <property type="match status" value="1"/>
</dbReference>
<dbReference type="NCBIfam" id="NF004322">
    <property type="entry name" value="PRK05715.1-4"/>
    <property type="match status" value="1"/>
</dbReference>
<dbReference type="NCBIfam" id="NF004323">
    <property type="entry name" value="PRK05715.1-5"/>
    <property type="match status" value="1"/>
</dbReference>
<dbReference type="PANTHER" id="PTHR11434:SF16">
    <property type="entry name" value="NADH-UBIQUINONE OXIDOREDUCTASE CHAIN 4L"/>
    <property type="match status" value="1"/>
</dbReference>
<dbReference type="PANTHER" id="PTHR11434">
    <property type="entry name" value="NADH-UBIQUINONE OXIDOREDUCTASE SUBUNIT ND4L"/>
    <property type="match status" value="1"/>
</dbReference>
<dbReference type="Pfam" id="PF00420">
    <property type="entry name" value="Oxidored_q2"/>
    <property type="match status" value="1"/>
</dbReference>
<geneLocation type="chloroplast"/>
<proteinExistence type="inferred from homology"/>
<protein>
    <recommendedName>
        <fullName evidence="1">NAD(P)H-quinone oxidoreductase subunit 4L, chloroplastic</fullName>
        <ecNumber evidence="1">7.1.1.-</ecNumber>
    </recommendedName>
    <alternativeName>
        <fullName evidence="1">NAD(P)H dehydrogenase subunit 4L</fullName>
    </alternativeName>
    <alternativeName>
        <fullName evidence="1">NADH-plastoquinone oxidoreductase subunit 4L</fullName>
    </alternativeName>
</protein>
<gene>
    <name evidence="1" type="primary">ndhE</name>
</gene>
<sequence>MLEHALILGAYLFSIGIYGLVTSRNMVKALMCLELILNAVNLNLVTFSNFFDSRQVKGDIFSIFVIAIAAAEAAIGLAIVLAIYRNRKSTRIDQFNLSKW</sequence>
<organism>
    <name type="scientific">Cryptomeria japonica</name>
    <name type="common">Japanese cedar</name>
    <name type="synonym">Cupressus japonica</name>
    <dbReference type="NCBI Taxonomy" id="3369"/>
    <lineage>
        <taxon>Eukaryota</taxon>
        <taxon>Viridiplantae</taxon>
        <taxon>Streptophyta</taxon>
        <taxon>Embryophyta</taxon>
        <taxon>Tracheophyta</taxon>
        <taxon>Spermatophyta</taxon>
        <taxon>Pinopsida</taxon>
        <taxon>Pinidae</taxon>
        <taxon>Conifers II</taxon>
        <taxon>Cupressales</taxon>
        <taxon>Cupressaceae</taxon>
        <taxon>Cryptomeria</taxon>
    </lineage>
</organism>
<reference key="1">
    <citation type="journal article" date="2008" name="BMC Plant Biol.">
        <title>Complete nucleotide sequence of the Cryptomeria japonica D. Don. chloroplast genome and comparative chloroplast genomics: diversified genomic structure of coniferous species.</title>
        <authorList>
            <person name="Hirao T."/>
            <person name="Watanabe A."/>
            <person name="Kurita M."/>
            <person name="Kondo T."/>
            <person name="Takata K."/>
        </authorList>
    </citation>
    <scope>NUCLEOTIDE SEQUENCE [LARGE SCALE GENOMIC DNA]</scope>
</reference>
<comment type="function">
    <text evidence="1">NDH shuttles electrons from NAD(P)H:plastoquinone, via FMN and iron-sulfur (Fe-S) centers, to quinones in the photosynthetic chain and possibly in a chloroplast respiratory chain. The immediate electron acceptor for the enzyme in this species is believed to be plastoquinone. Couples the redox reaction to proton translocation, and thus conserves the redox energy in a proton gradient.</text>
</comment>
<comment type="catalytic activity">
    <reaction evidence="1">
        <text>a plastoquinone + NADH + (n+1) H(+)(in) = a plastoquinol + NAD(+) + n H(+)(out)</text>
        <dbReference type="Rhea" id="RHEA:42608"/>
        <dbReference type="Rhea" id="RHEA-COMP:9561"/>
        <dbReference type="Rhea" id="RHEA-COMP:9562"/>
        <dbReference type="ChEBI" id="CHEBI:15378"/>
        <dbReference type="ChEBI" id="CHEBI:17757"/>
        <dbReference type="ChEBI" id="CHEBI:57540"/>
        <dbReference type="ChEBI" id="CHEBI:57945"/>
        <dbReference type="ChEBI" id="CHEBI:62192"/>
    </reaction>
</comment>
<comment type="catalytic activity">
    <reaction evidence="1">
        <text>a plastoquinone + NADPH + (n+1) H(+)(in) = a plastoquinol + NADP(+) + n H(+)(out)</text>
        <dbReference type="Rhea" id="RHEA:42612"/>
        <dbReference type="Rhea" id="RHEA-COMP:9561"/>
        <dbReference type="Rhea" id="RHEA-COMP:9562"/>
        <dbReference type="ChEBI" id="CHEBI:15378"/>
        <dbReference type="ChEBI" id="CHEBI:17757"/>
        <dbReference type="ChEBI" id="CHEBI:57783"/>
        <dbReference type="ChEBI" id="CHEBI:58349"/>
        <dbReference type="ChEBI" id="CHEBI:62192"/>
    </reaction>
</comment>
<comment type="subunit">
    <text evidence="1">NDH is composed of at least 16 different subunits, 5 of which are encoded in the nucleus.</text>
</comment>
<comment type="subcellular location">
    <subcellularLocation>
        <location evidence="1">Plastid</location>
        <location evidence="1">Chloroplast thylakoid membrane</location>
        <topology evidence="1">Multi-pass membrane protein</topology>
    </subcellularLocation>
</comment>
<comment type="similarity">
    <text evidence="1">Belongs to the complex I subunit 4L family.</text>
</comment>